<evidence type="ECO:0000250" key="1"/>
<evidence type="ECO:0000250" key="2">
    <source>
        <dbReference type="UniProtKB" id="Q9H5I1"/>
    </source>
</evidence>
<evidence type="ECO:0000255" key="3">
    <source>
        <dbReference type="PROSITE-ProRule" id="PRU00157"/>
    </source>
</evidence>
<evidence type="ECO:0000255" key="4">
    <source>
        <dbReference type="PROSITE-ProRule" id="PRU00190"/>
    </source>
</evidence>
<evidence type="ECO:0000255" key="5">
    <source>
        <dbReference type="PROSITE-ProRule" id="PRU00913"/>
    </source>
</evidence>
<evidence type="ECO:0000256" key="6">
    <source>
        <dbReference type="SAM" id="MobiDB-lite"/>
    </source>
</evidence>
<evidence type="ECO:0000269" key="7">
    <source>
    </source>
</evidence>
<evidence type="ECO:0000269" key="8">
    <source>
    </source>
</evidence>
<evidence type="ECO:0000305" key="9"/>
<evidence type="ECO:0007829" key="10">
    <source>
        <dbReference type="PDB" id="2LXE"/>
    </source>
</evidence>
<organism>
    <name type="scientific">Arabidopsis thaliana</name>
    <name type="common">Mouse-ear cress</name>
    <dbReference type="NCBI Taxonomy" id="3702"/>
    <lineage>
        <taxon>Eukaryota</taxon>
        <taxon>Viridiplantae</taxon>
        <taxon>Streptophyta</taxon>
        <taxon>Embryophyta</taxon>
        <taxon>Tracheophyta</taxon>
        <taxon>Spermatophyta</taxon>
        <taxon>Magnoliopsida</taxon>
        <taxon>eudicotyledons</taxon>
        <taxon>Gunneridae</taxon>
        <taxon>Pentapetalae</taxon>
        <taxon>rosids</taxon>
        <taxon>malvids</taxon>
        <taxon>Brassicales</taxon>
        <taxon>Brassicaceae</taxon>
        <taxon>Camelineae</taxon>
        <taxon>Arabidopsis</taxon>
    </lineage>
</organism>
<keyword id="KW-0002">3D-structure</keyword>
<keyword id="KW-0025">Alternative splicing</keyword>
<keyword id="KW-0156">Chromatin regulator</keyword>
<keyword id="KW-0158">Chromosome</keyword>
<keyword id="KW-0479">Metal-binding</keyword>
<keyword id="KW-0489">Methyltransferase</keyword>
<keyword id="KW-0539">Nucleus</keyword>
<keyword id="KW-1185">Reference proteome</keyword>
<keyword id="KW-0949">S-adenosyl-L-methionine</keyword>
<keyword id="KW-0808">Transferase</keyword>
<keyword id="KW-0862">Zinc</keyword>
<proteinExistence type="evidence at protein level"/>
<reference key="1">
    <citation type="journal article" date="2001" name="Nucleic Acids Res.">
        <title>The Arabidopsis thaliana genome contains at least 29 active genes encoding SET domain proteins that can be assigned to four evolutionarily conserved classes.</title>
        <authorList>
            <person name="Baumbusch L.O."/>
            <person name="Thorstensen T."/>
            <person name="Krauss V."/>
            <person name="Fischer A."/>
            <person name="Naumann K."/>
            <person name="Assalkhou R."/>
            <person name="Schulz I."/>
            <person name="Reuter G."/>
            <person name="Aalen R.B."/>
        </authorList>
    </citation>
    <scope>NUCLEOTIDE SEQUENCE [MRNA]</scope>
    <scope>NOMENCLATURE</scope>
</reference>
<reference key="2">
    <citation type="journal article" date="2000" name="Nature">
        <title>Sequence and analysis of chromosome 3 of the plant Arabidopsis thaliana.</title>
        <authorList>
            <person name="Salanoubat M."/>
            <person name="Lemcke K."/>
            <person name="Rieger M."/>
            <person name="Ansorge W."/>
            <person name="Unseld M."/>
            <person name="Fartmann B."/>
            <person name="Valle G."/>
            <person name="Bloecker H."/>
            <person name="Perez-Alonso M."/>
            <person name="Obermaier B."/>
            <person name="Delseny M."/>
            <person name="Boutry M."/>
            <person name="Grivell L.A."/>
            <person name="Mache R."/>
            <person name="Puigdomenech P."/>
            <person name="De Simone V."/>
            <person name="Choisne N."/>
            <person name="Artiguenave F."/>
            <person name="Robert C."/>
            <person name="Brottier P."/>
            <person name="Wincker P."/>
            <person name="Cattolico L."/>
            <person name="Weissenbach J."/>
            <person name="Saurin W."/>
            <person name="Quetier F."/>
            <person name="Schaefer M."/>
            <person name="Mueller-Auer S."/>
            <person name="Gabel C."/>
            <person name="Fuchs M."/>
            <person name="Benes V."/>
            <person name="Wurmbach E."/>
            <person name="Drzonek H."/>
            <person name="Erfle H."/>
            <person name="Jordan N."/>
            <person name="Bangert S."/>
            <person name="Wiedelmann R."/>
            <person name="Kranz H."/>
            <person name="Voss H."/>
            <person name="Holland R."/>
            <person name="Brandt P."/>
            <person name="Nyakatura G."/>
            <person name="Vezzi A."/>
            <person name="D'Angelo M."/>
            <person name="Pallavicini A."/>
            <person name="Toppo S."/>
            <person name="Simionati B."/>
            <person name="Conrad A."/>
            <person name="Hornischer K."/>
            <person name="Kauer G."/>
            <person name="Loehnert T.-H."/>
            <person name="Nordsiek G."/>
            <person name="Reichelt J."/>
            <person name="Scharfe M."/>
            <person name="Schoen O."/>
            <person name="Bargues M."/>
            <person name="Terol J."/>
            <person name="Climent J."/>
            <person name="Navarro P."/>
            <person name="Collado C."/>
            <person name="Perez-Perez A."/>
            <person name="Ottenwaelder B."/>
            <person name="Duchemin D."/>
            <person name="Cooke R."/>
            <person name="Laudie M."/>
            <person name="Berger-Llauro C."/>
            <person name="Purnelle B."/>
            <person name="Masuy D."/>
            <person name="de Haan M."/>
            <person name="Maarse A.C."/>
            <person name="Alcaraz J.-P."/>
            <person name="Cottet A."/>
            <person name="Casacuberta E."/>
            <person name="Monfort A."/>
            <person name="Argiriou A."/>
            <person name="Flores M."/>
            <person name="Liguori R."/>
            <person name="Vitale D."/>
            <person name="Mannhaupt G."/>
            <person name="Haase D."/>
            <person name="Schoof H."/>
            <person name="Rudd S."/>
            <person name="Zaccaria P."/>
            <person name="Mewes H.-W."/>
            <person name="Mayer K.F.X."/>
            <person name="Kaul S."/>
            <person name="Town C.D."/>
            <person name="Koo H.L."/>
            <person name="Tallon L.J."/>
            <person name="Jenkins J."/>
            <person name="Rooney T."/>
            <person name="Rizzo M."/>
            <person name="Walts A."/>
            <person name="Utterback T."/>
            <person name="Fujii C.Y."/>
            <person name="Shea T.P."/>
            <person name="Creasy T.H."/>
            <person name="Haas B."/>
            <person name="Maiti R."/>
            <person name="Wu D."/>
            <person name="Peterson J."/>
            <person name="Van Aken S."/>
            <person name="Pai G."/>
            <person name="Militscher J."/>
            <person name="Sellers P."/>
            <person name="Gill J.E."/>
            <person name="Feldblyum T.V."/>
            <person name="Preuss D."/>
            <person name="Lin X."/>
            <person name="Nierman W.C."/>
            <person name="Salzberg S.L."/>
            <person name="White O."/>
            <person name="Venter J.C."/>
            <person name="Fraser C.M."/>
            <person name="Kaneko T."/>
            <person name="Nakamura Y."/>
            <person name="Sato S."/>
            <person name="Kato T."/>
            <person name="Asamizu E."/>
            <person name="Sasamoto S."/>
            <person name="Kimura T."/>
            <person name="Idesawa K."/>
            <person name="Kawashima K."/>
            <person name="Kishida Y."/>
            <person name="Kiyokawa C."/>
            <person name="Kohara M."/>
            <person name="Matsumoto M."/>
            <person name="Matsuno A."/>
            <person name="Muraki A."/>
            <person name="Nakayama S."/>
            <person name="Nakazaki N."/>
            <person name="Shinpo S."/>
            <person name="Takeuchi C."/>
            <person name="Wada T."/>
            <person name="Watanabe A."/>
            <person name="Yamada M."/>
            <person name="Yasuda M."/>
            <person name="Tabata S."/>
        </authorList>
    </citation>
    <scope>NUCLEOTIDE SEQUENCE [LARGE SCALE GENOMIC DNA]</scope>
    <source>
        <strain>cv. Columbia</strain>
    </source>
</reference>
<reference key="3">
    <citation type="journal article" date="2017" name="Plant J.">
        <title>Araport11: a complete reannotation of the Arabidopsis thaliana reference genome.</title>
        <authorList>
            <person name="Cheng C.Y."/>
            <person name="Krishnakumar V."/>
            <person name="Chan A.P."/>
            <person name="Thibaud-Nissen F."/>
            <person name="Schobel S."/>
            <person name="Town C.D."/>
        </authorList>
    </citation>
    <scope>GENOME REANNOTATION</scope>
    <source>
        <strain>cv. Columbia</strain>
    </source>
</reference>
<reference key="4">
    <citation type="journal article" date="2011" name="PLoS Genet.">
        <title>The SUVR4 histone lysine methyltransferase binds ubiquitin and converts H3K9me1 to H3K9me3 on transposon chromatin in Arabidopsis.</title>
        <authorList>
            <person name="Veiseth S.V."/>
            <person name="Rahman M.A."/>
            <person name="Yap K.L."/>
            <person name="Fischer A."/>
            <person name="Egge-Jacobsen W."/>
            <person name="Reuter G."/>
            <person name="Zhou M.M."/>
            <person name="Aalen R.B."/>
            <person name="Thorstensen T."/>
        </authorList>
    </citation>
    <scope>FUNCTION</scope>
    <scope>INTERACTION WITH UBIQUITIN</scope>
    <scope>CATALYTIC ACTIVITY</scope>
</reference>
<reference key="5">
    <citation type="journal article" date="2014" name="Biochemistry">
        <title>The Arabidopsis histone methyltransferase SUVR4 binds ubiquitin via a domain with a four-helix bundle structure.</title>
        <authorList>
            <person name="Rahman M.A."/>
            <person name="Kristiansen P.E."/>
            <person name="Veiseth S.V."/>
            <person name="Andersen J.T."/>
            <person name="Yap K.L."/>
            <person name="Zhou M.M."/>
            <person name="Sandlie I."/>
            <person name="Thorstensen T."/>
            <person name="Aalen R.B."/>
        </authorList>
    </citation>
    <scope>STRUCTURE BY NMR OF 1-89</scope>
    <scope>INTERACTION WITH UBIQUITIN</scope>
</reference>
<gene>
    <name type="primary">SUVR4</name>
    <name type="synonym">SDG31</name>
    <name type="synonym">SET31</name>
    <name type="ordered locus">At3g04380</name>
    <name type="ORF">T27C4.2</name>
</gene>
<accession>Q8W595</accession>
<accession>Q3EBC4</accession>
<accession>Q9M848</accession>
<comment type="function">
    <text evidence="7">Histone methyltransferase that converts monomethylated 'Lys-9' of histone H3 (H3K9me1) to dimethylated 'Lys-9' (H3K9me2) in the absence of bound ubiquitin, and to trimethylated 'Lys-9' (H3K9me3) in the presence of bound ubiquitin. Acts in a locus-specific manner and contributes to the transcriptional silencing of pseudogenes and transposons. H3 'Lys-9' methylation represents a specific tag for epigenetic transcriptional repression.</text>
</comment>
<comment type="catalytic activity">
    <reaction evidence="5 7">
        <text>N(6)-methyl-L-lysyl(9)-[histone H3] + S-adenosyl-L-methionine = N(6),N(6)-dimethyl-L-lysyl(9)-[histone H3] + S-adenosyl-L-homocysteine + H(+)</text>
        <dbReference type="Rhea" id="RHEA:60284"/>
        <dbReference type="Rhea" id="RHEA-COMP:15541"/>
        <dbReference type="Rhea" id="RHEA-COMP:15542"/>
        <dbReference type="ChEBI" id="CHEBI:15378"/>
        <dbReference type="ChEBI" id="CHEBI:57856"/>
        <dbReference type="ChEBI" id="CHEBI:59789"/>
        <dbReference type="ChEBI" id="CHEBI:61929"/>
        <dbReference type="ChEBI" id="CHEBI:61976"/>
    </reaction>
</comment>
<comment type="catalytic activity">
    <reaction evidence="5 7">
        <text>N(6),N(6)-dimethyl-L-lysyl(9)-[histone H3] + S-adenosyl-L-methionine = N(6),N(6),N(6)-trimethyl-L-lysyl(9)-[histone H3] + S-adenosyl-L-homocysteine + H(+)</text>
        <dbReference type="Rhea" id="RHEA:60288"/>
        <dbReference type="Rhea" id="RHEA-COMP:15538"/>
        <dbReference type="Rhea" id="RHEA-COMP:15541"/>
        <dbReference type="ChEBI" id="CHEBI:15378"/>
        <dbReference type="ChEBI" id="CHEBI:57856"/>
        <dbReference type="ChEBI" id="CHEBI:59789"/>
        <dbReference type="ChEBI" id="CHEBI:61961"/>
        <dbReference type="ChEBI" id="CHEBI:61976"/>
        <dbReference type="EC" id="2.1.1.366"/>
    </reaction>
</comment>
<comment type="subunit">
    <text evidence="7 8">Interacts with ubiquitin.</text>
</comment>
<comment type="subcellular location">
    <subcellularLocation>
        <location evidence="1">Nucleus</location>
    </subcellularLocation>
    <subcellularLocation>
        <location evidence="1">Chromosome</location>
    </subcellularLocation>
    <text evidence="1">Associates with euchromatic regions.</text>
</comment>
<comment type="alternative products">
    <event type="alternative splicing"/>
    <isoform>
        <id>Q8W595-1</id>
        <name>1</name>
        <sequence type="displayed"/>
    </isoform>
    <text>A number of isoforms are produced. According to EST sequences.</text>
</comment>
<comment type="domain">
    <text evidence="1">In the pre-SET domain, Cys residues bind 3 zinc ions that are arranged in a triangular cluster; some of these Cys residues contribute to the binding of two zinc ions within the cluster.</text>
</comment>
<comment type="similarity">
    <text evidence="5">Belongs to the class V-like SAM-binding methyltransferase superfamily. Histone-lysine methyltransferase family.</text>
</comment>
<comment type="sequence caution" evidence="9">
    <conflict type="erroneous gene model prediction">
        <sequence resource="EMBL-CDS" id="AAF63769"/>
    </conflict>
</comment>
<feature type="chain" id="PRO_0000233368" description="Histone-lysine N-methyltransferase SUVR4">
    <location>
        <begin position="1"/>
        <end position="492"/>
    </location>
</feature>
<feature type="domain" description="Pre-SET" evidence="3">
    <location>
        <begin position="196"/>
        <end position="299"/>
    </location>
</feature>
<feature type="domain" description="SET" evidence="4">
    <location>
        <begin position="302"/>
        <end position="435"/>
    </location>
</feature>
<feature type="domain" description="Post-SET">
    <location>
        <begin position="446"/>
        <end position="462"/>
    </location>
</feature>
<feature type="region of interest" description="Disordered" evidence="6">
    <location>
        <begin position="112"/>
        <end position="138"/>
    </location>
</feature>
<feature type="region of interest" description="Disordered" evidence="6">
    <location>
        <begin position="463"/>
        <end position="492"/>
    </location>
</feature>
<feature type="compositionally biased region" description="Polar residues" evidence="6">
    <location>
        <begin position="113"/>
        <end position="133"/>
    </location>
</feature>
<feature type="binding site" evidence="2">
    <location>
        <position position="196"/>
    </location>
    <ligand>
        <name>Zn(2+)</name>
        <dbReference type="ChEBI" id="CHEBI:29105"/>
        <label>1</label>
    </ligand>
</feature>
<feature type="binding site" evidence="2">
    <location>
        <position position="196"/>
    </location>
    <ligand>
        <name>Zn(2+)</name>
        <dbReference type="ChEBI" id="CHEBI:29105"/>
        <label>2</label>
    </ligand>
</feature>
<feature type="binding site" evidence="2">
    <location>
        <position position="197"/>
    </location>
    <ligand>
        <name>Zn(2+)</name>
        <dbReference type="ChEBI" id="CHEBI:29105"/>
        <label>1</label>
    </ligand>
</feature>
<feature type="binding site" evidence="2">
    <location>
        <position position="200"/>
    </location>
    <ligand>
        <name>Zn(2+)</name>
        <dbReference type="ChEBI" id="CHEBI:29105"/>
        <label>1</label>
    </ligand>
</feature>
<feature type="binding site" evidence="2">
    <location>
        <position position="200"/>
    </location>
    <ligand>
        <name>Zn(2+)</name>
        <dbReference type="ChEBI" id="CHEBI:29105"/>
        <label>3</label>
    </ligand>
</feature>
<feature type="binding site" evidence="2">
    <location>
        <position position="204"/>
    </location>
    <ligand>
        <name>Zn(2+)</name>
        <dbReference type="ChEBI" id="CHEBI:29105"/>
        <label>1</label>
    </ligand>
</feature>
<feature type="binding site" evidence="2">
    <location>
        <position position="213"/>
    </location>
    <ligand>
        <name>Zn(2+)</name>
        <dbReference type="ChEBI" id="CHEBI:29105"/>
        <label>2</label>
    </ligand>
</feature>
<feature type="binding site" evidence="2">
    <location>
        <position position="281"/>
    </location>
    <ligand>
        <name>Zn(2+)</name>
        <dbReference type="ChEBI" id="CHEBI:29105"/>
        <label>2</label>
    </ligand>
</feature>
<feature type="binding site" evidence="2">
    <location>
        <position position="281"/>
    </location>
    <ligand>
        <name>Zn(2+)</name>
        <dbReference type="ChEBI" id="CHEBI:29105"/>
        <label>3</label>
    </ligand>
</feature>
<feature type="binding site" evidence="2">
    <location>
        <position position="285"/>
    </location>
    <ligand>
        <name>Zn(2+)</name>
        <dbReference type="ChEBI" id="CHEBI:29105"/>
        <label>2</label>
    </ligand>
</feature>
<feature type="binding site" evidence="2">
    <location>
        <position position="287"/>
    </location>
    <ligand>
        <name>Zn(2+)</name>
        <dbReference type="ChEBI" id="CHEBI:29105"/>
        <label>3</label>
    </ligand>
</feature>
<feature type="binding site" evidence="2">
    <location>
        <position position="291"/>
    </location>
    <ligand>
        <name>Zn(2+)</name>
        <dbReference type="ChEBI" id="CHEBI:29105"/>
        <label>3</label>
    </ligand>
</feature>
<feature type="binding site" evidence="2">
    <location>
        <begin position="313"/>
        <end position="315"/>
    </location>
    <ligand>
        <name>S-adenosyl-L-methionine</name>
        <dbReference type="ChEBI" id="CHEBI:59789"/>
    </ligand>
</feature>
<feature type="binding site" evidence="2">
    <location>
        <begin position="391"/>
        <end position="392"/>
    </location>
    <ligand>
        <name>S-adenosyl-L-methionine</name>
        <dbReference type="ChEBI" id="CHEBI:59789"/>
    </ligand>
</feature>
<feature type="binding site" evidence="2">
    <location>
        <position position="394"/>
    </location>
    <ligand>
        <name>Zn(2+)</name>
        <dbReference type="ChEBI" id="CHEBI:29105"/>
        <label>4</label>
    </ligand>
</feature>
<feature type="binding site" evidence="4">
    <location>
        <position position="434"/>
    </location>
    <ligand>
        <name>S-adenosyl-L-methionine</name>
        <dbReference type="ChEBI" id="CHEBI:59789"/>
    </ligand>
</feature>
<feature type="binding site" evidence="2">
    <location>
        <position position="450"/>
    </location>
    <ligand>
        <name>Zn(2+)</name>
        <dbReference type="ChEBI" id="CHEBI:29105"/>
        <label>4</label>
    </ligand>
</feature>
<feature type="binding site" evidence="2">
    <location>
        <position position="452"/>
    </location>
    <ligand>
        <name>Zn(2+)</name>
        <dbReference type="ChEBI" id="CHEBI:29105"/>
        <label>4</label>
    </ligand>
</feature>
<feature type="binding site" evidence="2">
    <location>
        <position position="457"/>
    </location>
    <ligand>
        <name>Zn(2+)</name>
        <dbReference type="ChEBI" id="CHEBI:29105"/>
        <label>4</label>
    </ligand>
</feature>
<feature type="sequence conflict" description="In Ref. 1; AAL01113." evidence="9" ref="1">
    <original>C</original>
    <variation>W</variation>
    <location>
        <position position="302"/>
    </location>
</feature>
<feature type="sequence conflict" description="In Ref. 1; AAL01113." evidence="9" ref="1">
    <original>QGSKEVS</original>
    <variation>ARFQRGV</variation>
    <location>
        <begin position="482"/>
        <end position="488"/>
    </location>
</feature>
<feature type="strand" evidence="10">
    <location>
        <begin position="7"/>
        <end position="9"/>
    </location>
</feature>
<feature type="turn" evidence="10">
    <location>
        <begin position="14"/>
        <end position="16"/>
    </location>
</feature>
<feature type="helix" evidence="10">
    <location>
        <begin position="17"/>
        <end position="21"/>
    </location>
</feature>
<feature type="helix" evidence="10">
    <location>
        <begin position="29"/>
        <end position="38"/>
    </location>
</feature>
<feature type="helix" evidence="10">
    <location>
        <begin position="43"/>
        <end position="56"/>
    </location>
</feature>
<feature type="helix" evidence="10">
    <location>
        <begin position="61"/>
        <end position="64"/>
    </location>
</feature>
<feature type="turn" evidence="10">
    <location>
        <begin position="65"/>
        <end position="68"/>
    </location>
</feature>
<feature type="helix" evidence="10">
    <location>
        <begin position="70"/>
        <end position="80"/>
    </location>
</feature>
<protein>
    <recommendedName>
        <fullName>Histone-lysine N-methyltransferase SUVR4</fullName>
        <ecNumber evidence="7">2.1.1.-</ecNumber>
        <ecNumber evidence="7">2.1.1.366</ecNumber>
    </recommendedName>
    <alternativeName>
        <fullName>Protein SET DOMAIN GROUP 31</fullName>
    </alternativeName>
    <alternativeName>
        <fullName>Suppressor of variegation 3-9-related protein 4</fullName>
        <shortName>Su(var)3-9-related protein 4</shortName>
    </alternativeName>
</protein>
<name>SUVR4_ARATH</name>
<sequence>MISLSGLTSSVESDLDMQQAMLTNKDEKVLKALERTRQLDIPDEKTMPVLMKLLEEAGGNWSYIKLDNYTALVDAIYSVEDENKQSEGSSNGNRGKNLKVIDSPATLKKTYETRSASSGSSIQVVQKQPQLSNGDRKRKYKSRIADITKGSESVKIPLVDDVGSEAVPKFTYIPHNIVYQSAYLHVSLARISDEDCCANCKGNCLSADFPCTCARETSGEYAYTKEGLLKEKFLDTCLKMKKEPDSFPKVYCKDCPLERDHDKGTYGKCDGHLIRKFIKECWRKCGCDMQCGNRVVQRGIRCQLQVYFTQEGKGWGLRTLQDLPKGTFICEYIGEILTNTELYDRNVRSSSERHTYPVTLDADWGSEKDLKDEEALCLDATICGNVARFINHRCEDANMIDIPIEIETPDRHYYHIAFFTLRDVKAMDELTWDYMIDFNDKSHPVKAFRCCCGSESCRDRKIKGSQGKSIERRKIVSAKKQQGSKEVSKKRK</sequence>
<dbReference type="EC" id="2.1.1.-" evidence="7"/>
<dbReference type="EC" id="2.1.1.366" evidence="7"/>
<dbReference type="EMBL" id="AF408062">
    <property type="protein sequence ID" value="AAL01113.2"/>
    <property type="molecule type" value="mRNA"/>
</dbReference>
<dbReference type="EMBL" id="AC022287">
    <property type="protein sequence ID" value="AAF63769.1"/>
    <property type="status" value="ALT_SEQ"/>
    <property type="molecule type" value="Genomic_DNA"/>
</dbReference>
<dbReference type="EMBL" id="CP002686">
    <property type="protein sequence ID" value="AEE74073.1"/>
    <property type="molecule type" value="Genomic_DNA"/>
</dbReference>
<dbReference type="RefSeq" id="NP_187088.2">
    <molecule id="Q8W595-1"/>
    <property type="nucleotide sequence ID" value="NM_111309.3"/>
</dbReference>
<dbReference type="PDB" id="2LXE">
    <property type="method" value="NMR"/>
    <property type="chains" value="A=1-89"/>
</dbReference>
<dbReference type="PDBsum" id="2LXE"/>
<dbReference type="BMRB" id="Q8W595"/>
<dbReference type="SMR" id="Q8W595"/>
<dbReference type="BioGRID" id="4928">
    <property type="interactions" value="6"/>
</dbReference>
<dbReference type="FunCoup" id="Q8W595">
    <property type="interactions" value="696"/>
</dbReference>
<dbReference type="IntAct" id="Q8W595">
    <property type="interactions" value="3"/>
</dbReference>
<dbReference type="STRING" id="3702.Q8W595"/>
<dbReference type="PaxDb" id="3702-AT3G04380.1"/>
<dbReference type="ProteomicsDB" id="226530">
    <molecule id="Q8W595-1"/>
</dbReference>
<dbReference type="EnsemblPlants" id="AT3G04380.1">
    <molecule id="Q8W595-1"/>
    <property type="protein sequence ID" value="AT3G04380.1"/>
    <property type="gene ID" value="AT3G04380"/>
</dbReference>
<dbReference type="GeneID" id="819593"/>
<dbReference type="Gramene" id="AT3G04380.1">
    <molecule id="Q8W595-1"/>
    <property type="protein sequence ID" value="AT3G04380.1"/>
    <property type="gene ID" value="AT3G04380"/>
</dbReference>
<dbReference type="KEGG" id="ath:AT3G04380"/>
<dbReference type="Araport" id="AT3G04380"/>
<dbReference type="TAIR" id="AT3G04380">
    <property type="gene designation" value="SUVR4"/>
</dbReference>
<dbReference type="eggNOG" id="KOG1082">
    <property type="taxonomic scope" value="Eukaryota"/>
</dbReference>
<dbReference type="InParanoid" id="Q8W595"/>
<dbReference type="PhylomeDB" id="Q8W595"/>
<dbReference type="BRENDA" id="2.1.1.B130">
    <property type="organism ID" value="399"/>
</dbReference>
<dbReference type="EvolutionaryTrace" id="Q8W595"/>
<dbReference type="PRO" id="PR:Q8W595"/>
<dbReference type="Proteomes" id="UP000006548">
    <property type="component" value="Chromosome 3"/>
</dbReference>
<dbReference type="ExpressionAtlas" id="Q8W595">
    <property type="expression patterns" value="baseline and differential"/>
</dbReference>
<dbReference type="GO" id="GO:0005694">
    <property type="term" value="C:chromosome"/>
    <property type="evidence" value="ECO:0007669"/>
    <property type="project" value="UniProtKB-SubCell"/>
</dbReference>
<dbReference type="GO" id="GO:0005730">
    <property type="term" value="C:nucleolus"/>
    <property type="evidence" value="ECO:0000314"/>
    <property type="project" value="TAIR"/>
</dbReference>
<dbReference type="GO" id="GO:0009506">
    <property type="term" value="C:plasmodesma"/>
    <property type="evidence" value="ECO:0007005"/>
    <property type="project" value="TAIR"/>
</dbReference>
<dbReference type="GO" id="GO:0140948">
    <property type="term" value="F:histone H3K9 monomethyltransferase activity"/>
    <property type="evidence" value="ECO:0007669"/>
    <property type="project" value="RHEA"/>
</dbReference>
<dbReference type="GO" id="GO:0008270">
    <property type="term" value="F:zinc ion binding"/>
    <property type="evidence" value="ECO:0007669"/>
    <property type="project" value="InterPro"/>
</dbReference>
<dbReference type="GO" id="GO:0006338">
    <property type="term" value="P:chromatin remodeling"/>
    <property type="evidence" value="ECO:0000314"/>
    <property type="project" value="UniProtKB"/>
</dbReference>
<dbReference type="GO" id="GO:0032259">
    <property type="term" value="P:methylation"/>
    <property type="evidence" value="ECO:0007669"/>
    <property type="project" value="UniProtKB-KW"/>
</dbReference>
<dbReference type="CDD" id="cd10538">
    <property type="entry name" value="SET_SETDB-like"/>
    <property type="match status" value="1"/>
</dbReference>
<dbReference type="FunFam" id="1.10.8.850:FF:000001">
    <property type="entry name" value="SET-domain containing protein lysine methyltransferase family protein"/>
    <property type="match status" value="1"/>
</dbReference>
<dbReference type="FunFam" id="2.170.270.10:FF:000046">
    <property type="entry name" value="SET-domain containing protein lysine methyltransferase family protein"/>
    <property type="match status" value="1"/>
</dbReference>
<dbReference type="Gene3D" id="1.10.8.850">
    <property type="entry name" value="Histone-lysine N methyltransferase , C-terminal domain-like"/>
    <property type="match status" value="1"/>
</dbReference>
<dbReference type="Gene3D" id="2.170.270.10">
    <property type="entry name" value="SET domain"/>
    <property type="match status" value="1"/>
</dbReference>
<dbReference type="InterPro" id="IPR007728">
    <property type="entry name" value="Pre-SET_dom"/>
</dbReference>
<dbReference type="InterPro" id="IPR001214">
    <property type="entry name" value="SET_dom"/>
</dbReference>
<dbReference type="InterPro" id="IPR046341">
    <property type="entry name" value="SET_dom_sf"/>
</dbReference>
<dbReference type="InterPro" id="IPR025776">
    <property type="entry name" value="SUVR4/1/2"/>
</dbReference>
<dbReference type="InterPro" id="IPR043017">
    <property type="entry name" value="WIYLD_dom_sf"/>
</dbReference>
<dbReference type="InterPro" id="IPR018848">
    <property type="entry name" value="WIYLD_domain"/>
</dbReference>
<dbReference type="PANTHER" id="PTHR46450:SF24">
    <property type="entry name" value="HISTONE-LYSINE N-METHYLTRANSFERASE SUVR4"/>
    <property type="match status" value="1"/>
</dbReference>
<dbReference type="PANTHER" id="PTHR46450">
    <property type="entry name" value="INACTIVE HISTONE-LYSINE N-METHYLTRANSFERASE SUVR1-RELATED"/>
    <property type="match status" value="1"/>
</dbReference>
<dbReference type="Pfam" id="PF00856">
    <property type="entry name" value="SET"/>
    <property type="match status" value="1"/>
</dbReference>
<dbReference type="Pfam" id="PF10440">
    <property type="entry name" value="WIYLD"/>
    <property type="match status" value="1"/>
</dbReference>
<dbReference type="SMART" id="SM00468">
    <property type="entry name" value="PreSET"/>
    <property type="match status" value="1"/>
</dbReference>
<dbReference type="SMART" id="SM00317">
    <property type="entry name" value="SET"/>
    <property type="match status" value="1"/>
</dbReference>
<dbReference type="SUPFAM" id="SSF82199">
    <property type="entry name" value="SET domain"/>
    <property type="match status" value="1"/>
</dbReference>
<dbReference type="PROSITE" id="PS50867">
    <property type="entry name" value="PRE_SET"/>
    <property type="match status" value="1"/>
</dbReference>
<dbReference type="PROSITE" id="PS51580">
    <property type="entry name" value="SAM_MT43_3"/>
    <property type="match status" value="1"/>
</dbReference>
<dbReference type="PROSITE" id="PS50280">
    <property type="entry name" value="SET"/>
    <property type="match status" value="1"/>
</dbReference>